<organism>
    <name type="scientific">Salmonella typhi</name>
    <dbReference type="NCBI Taxonomy" id="90370"/>
    <lineage>
        <taxon>Bacteria</taxon>
        <taxon>Pseudomonadati</taxon>
        <taxon>Pseudomonadota</taxon>
        <taxon>Gammaproteobacteria</taxon>
        <taxon>Enterobacterales</taxon>
        <taxon>Enterobacteriaceae</taxon>
        <taxon>Salmonella</taxon>
    </lineage>
</organism>
<name>LOLA_SALTI</name>
<accession>Q8Z813</accession>
<dbReference type="EMBL" id="AL513382">
    <property type="protein sequence ID" value="CAD05361.1"/>
    <property type="status" value="ALT_INIT"/>
    <property type="molecule type" value="Genomic_DNA"/>
</dbReference>
<dbReference type="EMBL" id="AE014613">
    <property type="protein sequence ID" value="AAO69586.1"/>
    <property type="status" value="ALT_INIT"/>
    <property type="molecule type" value="Genomic_DNA"/>
</dbReference>
<dbReference type="PIR" id="AG0611">
    <property type="entry name" value="AG0611"/>
</dbReference>
<dbReference type="RefSeq" id="NP_455449.1">
    <property type="nucleotide sequence ID" value="NC_003198.1"/>
</dbReference>
<dbReference type="RefSeq" id="WP_001765126.1">
    <property type="nucleotide sequence ID" value="NZ_WSUR01000013.1"/>
</dbReference>
<dbReference type="SMR" id="Q8Z813"/>
<dbReference type="STRING" id="220341.gene:17584952"/>
<dbReference type="KEGG" id="stt:t1973"/>
<dbReference type="KEGG" id="sty:STY0959"/>
<dbReference type="PATRIC" id="fig|220341.7.peg.967"/>
<dbReference type="eggNOG" id="COG2834">
    <property type="taxonomic scope" value="Bacteria"/>
</dbReference>
<dbReference type="HOGENOM" id="CLU_087560_1_1_6"/>
<dbReference type="OMA" id="YDPFVEQ"/>
<dbReference type="OrthoDB" id="9787361at2"/>
<dbReference type="Proteomes" id="UP000000541">
    <property type="component" value="Chromosome"/>
</dbReference>
<dbReference type="Proteomes" id="UP000002670">
    <property type="component" value="Chromosome"/>
</dbReference>
<dbReference type="GO" id="GO:0030288">
    <property type="term" value="C:outer membrane-bounded periplasmic space"/>
    <property type="evidence" value="ECO:0007669"/>
    <property type="project" value="TreeGrafter"/>
</dbReference>
<dbReference type="GO" id="GO:0044874">
    <property type="term" value="P:lipoprotein localization to outer membrane"/>
    <property type="evidence" value="ECO:0007669"/>
    <property type="project" value="UniProtKB-UniRule"/>
</dbReference>
<dbReference type="GO" id="GO:0042953">
    <property type="term" value="P:lipoprotein transport"/>
    <property type="evidence" value="ECO:0007669"/>
    <property type="project" value="InterPro"/>
</dbReference>
<dbReference type="CDD" id="cd16325">
    <property type="entry name" value="LolA"/>
    <property type="match status" value="1"/>
</dbReference>
<dbReference type="FunFam" id="2.50.20.10:FF:000001">
    <property type="entry name" value="Outer-membrane lipoprotein carrier protein"/>
    <property type="match status" value="1"/>
</dbReference>
<dbReference type="Gene3D" id="2.50.20.10">
    <property type="entry name" value="Lipoprotein localisation LolA/LolB/LppX"/>
    <property type="match status" value="1"/>
</dbReference>
<dbReference type="HAMAP" id="MF_00240">
    <property type="entry name" value="LolA"/>
    <property type="match status" value="1"/>
</dbReference>
<dbReference type="InterPro" id="IPR029046">
    <property type="entry name" value="LolA/LolB/LppX"/>
</dbReference>
<dbReference type="InterPro" id="IPR004564">
    <property type="entry name" value="OM_lipoprot_carrier_LolA-like"/>
</dbReference>
<dbReference type="InterPro" id="IPR018323">
    <property type="entry name" value="OM_lipoprot_carrier_LolA_Pbac"/>
</dbReference>
<dbReference type="NCBIfam" id="TIGR00547">
    <property type="entry name" value="lolA"/>
    <property type="match status" value="1"/>
</dbReference>
<dbReference type="PANTHER" id="PTHR35869">
    <property type="entry name" value="OUTER-MEMBRANE LIPOPROTEIN CARRIER PROTEIN"/>
    <property type="match status" value="1"/>
</dbReference>
<dbReference type="PANTHER" id="PTHR35869:SF1">
    <property type="entry name" value="OUTER-MEMBRANE LIPOPROTEIN CARRIER PROTEIN"/>
    <property type="match status" value="1"/>
</dbReference>
<dbReference type="Pfam" id="PF03548">
    <property type="entry name" value="LolA"/>
    <property type="match status" value="1"/>
</dbReference>
<dbReference type="SUPFAM" id="SSF89392">
    <property type="entry name" value="Prokaryotic lipoproteins and lipoprotein localization factors"/>
    <property type="match status" value="1"/>
</dbReference>
<evidence type="ECO:0000255" key="1">
    <source>
        <dbReference type="HAMAP-Rule" id="MF_00240"/>
    </source>
</evidence>
<evidence type="ECO:0000256" key="2">
    <source>
        <dbReference type="SAM" id="MobiDB-lite"/>
    </source>
</evidence>
<evidence type="ECO:0000305" key="3"/>
<keyword id="KW-0143">Chaperone</keyword>
<keyword id="KW-0574">Periplasm</keyword>
<keyword id="KW-0653">Protein transport</keyword>
<keyword id="KW-0732">Signal</keyword>
<keyword id="KW-0813">Transport</keyword>
<reference key="1">
    <citation type="journal article" date="2001" name="Nature">
        <title>Complete genome sequence of a multiple drug resistant Salmonella enterica serovar Typhi CT18.</title>
        <authorList>
            <person name="Parkhill J."/>
            <person name="Dougan G."/>
            <person name="James K.D."/>
            <person name="Thomson N.R."/>
            <person name="Pickard D."/>
            <person name="Wain J."/>
            <person name="Churcher C.M."/>
            <person name="Mungall K.L."/>
            <person name="Bentley S.D."/>
            <person name="Holden M.T.G."/>
            <person name="Sebaihia M."/>
            <person name="Baker S."/>
            <person name="Basham D."/>
            <person name="Brooks K."/>
            <person name="Chillingworth T."/>
            <person name="Connerton P."/>
            <person name="Cronin A."/>
            <person name="Davis P."/>
            <person name="Davies R.M."/>
            <person name="Dowd L."/>
            <person name="White N."/>
            <person name="Farrar J."/>
            <person name="Feltwell T."/>
            <person name="Hamlin N."/>
            <person name="Haque A."/>
            <person name="Hien T.T."/>
            <person name="Holroyd S."/>
            <person name="Jagels K."/>
            <person name="Krogh A."/>
            <person name="Larsen T.S."/>
            <person name="Leather S."/>
            <person name="Moule S."/>
            <person name="O'Gaora P."/>
            <person name="Parry C."/>
            <person name="Quail M.A."/>
            <person name="Rutherford K.M."/>
            <person name="Simmonds M."/>
            <person name="Skelton J."/>
            <person name="Stevens K."/>
            <person name="Whitehead S."/>
            <person name="Barrell B.G."/>
        </authorList>
    </citation>
    <scope>NUCLEOTIDE SEQUENCE [LARGE SCALE GENOMIC DNA]</scope>
    <source>
        <strain>CT18</strain>
    </source>
</reference>
<reference key="2">
    <citation type="journal article" date="2003" name="J. Bacteriol.">
        <title>Comparative genomics of Salmonella enterica serovar Typhi strains Ty2 and CT18.</title>
        <authorList>
            <person name="Deng W."/>
            <person name="Liou S.-R."/>
            <person name="Plunkett G. III"/>
            <person name="Mayhew G.F."/>
            <person name="Rose D.J."/>
            <person name="Burland V."/>
            <person name="Kodoyianni V."/>
            <person name="Schwartz D.C."/>
            <person name="Blattner F.R."/>
        </authorList>
    </citation>
    <scope>NUCLEOTIDE SEQUENCE [LARGE SCALE GENOMIC DNA]</scope>
    <source>
        <strain>ATCC 700931 / Ty2</strain>
    </source>
</reference>
<feature type="signal peptide" evidence="1">
    <location>
        <begin position="1"/>
        <end position="21"/>
    </location>
</feature>
<feature type="chain" id="PRO_0000018274" description="Outer-membrane lipoprotein carrier protein">
    <location>
        <begin position="22"/>
        <end position="203"/>
    </location>
</feature>
<feature type="region of interest" description="Disordered" evidence="2">
    <location>
        <begin position="178"/>
        <end position="203"/>
    </location>
</feature>
<sequence>MKKMAIACALLSSVVASSVWADAASSLKSRLDKVSSFHATFTQKVTDGSGAAVQEGQGDLWVKRPNLFNWHMTQPDESILVSDGKTLWFYNPFVEQATATWLKDATGNTPFMLIARNQASDWQQYNIKQDGDNFVLTPKASNGNLKQFTINVGRDGTIHQFSAVEQDDQRSAYQLKSQQNGAVEPSKFTFTPPQGVTIDDQRK</sequence>
<protein>
    <recommendedName>
        <fullName evidence="1">Outer-membrane lipoprotein carrier protein</fullName>
    </recommendedName>
</protein>
<comment type="function">
    <text evidence="1">Participates in the translocation of lipoproteins from the inner membrane to the outer membrane. Only forms a complex with a lipoprotein if the residue after the N-terminal Cys is not an aspartate (The Asp acts as a targeting signal to indicate that the lipoprotein should stay in the inner membrane).</text>
</comment>
<comment type="subunit">
    <text evidence="1">Monomer.</text>
</comment>
<comment type="subcellular location">
    <subcellularLocation>
        <location evidence="1">Periplasm</location>
    </subcellularLocation>
</comment>
<comment type="similarity">
    <text evidence="1">Belongs to the LolA family.</text>
</comment>
<comment type="sequence caution" evidence="3">
    <conflict type="erroneous initiation">
        <sequence resource="EMBL-CDS" id="AAO69586"/>
    </conflict>
</comment>
<comment type="sequence caution" evidence="3">
    <conflict type="erroneous initiation">
        <sequence resource="EMBL-CDS" id="CAD05361"/>
    </conflict>
</comment>
<gene>
    <name evidence="1" type="primary">lolA</name>
    <name type="ordered locus">STY0959</name>
    <name type="ordered locus">t1973</name>
</gene>
<proteinExistence type="inferred from homology"/>